<dbReference type="EC" id="2.4.1.186"/>
<dbReference type="EMBL" id="AAFW02000152">
    <property type="protein sequence ID" value="EDN59961.1"/>
    <property type="status" value="ALT_INIT"/>
    <property type="molecule type" value="Genomic_DNA"/>
</dbReference>
<dbReference type="SMR" id="A7A018"/>
<dbReference type="GlyCosmos" id="A7A018">
    <property type="glycosylation" value="2 sites, No reported glycans"/>
</dbReference>
<dbReference type="HOGENOM" id="CLU_017171_4_1_1"/>
<dbReference type="OrthoDB" id="16539at4893"/>
<dbReference type="Proteomes" id="UP000007060">
    <property type="component" value="Unassembled WGS sequence"/>
</dbReference>
<dbReference type="GO" id="GO:0005737">
    <property type="term" value="C:cytoplasm"/>
    <property type="evidence" value="ECO:0000250"/>
    <property type="project" value="UniProtKB"/>
</dbReference>
<dbReference type="GO" id="GO:0005773">
    <property type="term" value="C:vacuole"/>
    <property type="evidence" value="ECO:0000250"/>
    <property type="project" value="UniProtKB"/>
</dbReference>
<dbReference type="GO" id="GO:0008466">
    <property type="term" value="F:glycogenin glucosyltransferase activity"/>
    <property type="evidence" value="ECO:0007669"/>
    <property type="project" value="UniProtKB-EC"/>
</dbReference>
<dbReference type="GO" id="GO:0046872">
    <property type="term" value="F:metal ion binding"/>
    <property type="evidence" value="ECO:0007669"/>
    <property type="project" value="UniProtKB-KW"/>
</dbReference>
<dbReference type="GO" id="GO:0005978">
    <property type="term" value="P:glycogen biosynthetic process"/>
    <property type="evidence" value="ECO:0007669"/>
    <property type="project" value="UniProtKB-KW"/>
</dbReference>
<dbReference type="CDD" id="cd02537">
    <property type="entry name" value="GT8_Glycogenin"/>
    <property type="match status" value="1"/>
</dbReference>
<dbReference type="FunFam" id="3.90.550.10:FF:000148">
    <property type="entry name" value="Glg2p"/>
    <property type="match status" value="1"/>
</dbReference>
<dbReference type="Gene3D" id="3.90.550.10">
    <property type="entry name" value="Spore Coat Polysaccharide Biosynthesis Protein SpsA, Chain A"/>
    <property type="match status" value="1"/>
</dbReference>
<dbReference type="InterPro" id="IPR002495">
    <property type="entry name" value="Glyco_trans_8"/>
</dbReference>
<dbReference type="InterPro" id="IPR050587">
    <property type="entry name" value="GNT1/Glycosyltrans_8"/>
</dbReference>
<dbReference type="InterPro" id="IPR029044">
    <property type="entry name" value="Nucleotide-diphossugar_trans"/>
</dbReference>
<dbReference type="PANTHER" id="PTHR11183">
    <property type="entry name" value="GLYCOGENIN SUBFAMILY MEMBER"/>
    <property type="match status" value="1"/>
</dbReference>
<dbReference type="Pfam" id="PF01501">
    <property type="entry name" value="Glyco_transf_8"/>
    <property type="match status" value="1"/>
</dbReference>
<dbReference type="SUPFAM" id="SSF53448">
    <property type="entry name" value="Nucleotide-diphospho-sugar transferases"/>
    <property type="match status" value="1"/>
</dbReference>
<feature type="chain" id="PRO_0000337759" description="Glycogenin-1">
    <location>
        <begin position="1"/>
        <end position="616"/>
    </location>
</feature>
<feature type="region of interest" description="Disordered" evidence="6">
    <location>
        <begin position="283"/>
        <end position="320"/>
    </location>
</feature>
<feature type="region of interest" description="Disordered" evidence="6">
    <location>
        <begin position="335"/>
        <end position="354"/>
    </location>
</feature>
<feature type="region of interest" description="Disordered" evidence="6">
    <location>
        <begin position="371"/>
        <end position="516"/>
    </location>
</feature>
<feature type="compositionally biased region" description="Basic and acidic residues" evidence="6">
    <location>
        <begin position="283"/>
        <end position="302"/>
    </location>
</feature>
<feature type="compositionally biased region" description="Basic and acidic residues" evidence="6">
    <location>
        <begin position="377"/>
        <end position="386"/>
    </location>
</feature>
<feature type="compositionally biased region" description="Polar residues" evidence="6">
    <location>
        <begin position="400"/>
        <end position="419"/>
    </location>
</feature>
<feature type="compositionally biased region" description="Low complexity" evidence="6">
    <location>
        <begin position="450"/>
        <end position="461"/>
    </location>
</feature>
<feature type="compositionally biased region" description="Polar residues" evidence="6">
    <location>
        <begin position="462"/>
        <end position="485"/>
    </location>
</feature>
<feature type="compositionally biased region" description="Polar residues" evidence="6">
    <location>
        <begin position="492"/>
        <end position="503"/>
    </location>
</feature>
<feature type="binding site" evidence="5">
    <location>
        <position position="10"/>
    </location>
    <ligand>
        <name>UDP</name>
        <dbReference type="ChEBI" id="CHEBI:58223"/>
    </ligand>
</feature>
<feature type="binding site" evidence="5">
    <location>
        <position position="10"/>
    </location>
    <ligand>
        <name>UDP-alpha-D-glucose</name>
        <dbReference type="ChEBI" id="CHEBI:58885"/>
    </ligand>
</feature>
<feature type="binding site" evidence="5">
    <location>
        <position position="16"/>
    </location>
    <ligand>
        <name>UDP</name>
        <dbReference type="ChEBI" id="CHEBI:58223"/>
    </ligand>
</feature>
<feature type="binding site" evidence="5">
    <location>
        <position position="16"/>
    </location>
    <ligand>
        <name>UDP-alpha-D-glucose</name>
        <dbReference type="ChEBI" id="CHEBI:58885"/>
    </ligand>
</feature>
<feature type="binding site" evidence="5">
    <location>
        <position position="95"/>
    </location>
    <ligand>
        <name>UDP</name>
        <dbReference type="ChEBI" id="CHEBI:58223"/>
    </ligand>
</feature>
<feature type="binding site" evidence="5">
    <location>
        <position position="95"/>
    </location>
    <ligand>
        <name>UDP-alpha-D-glucose</name>
        <dbReference type="ChEBI" id="CHEBI:58885"/>
    </ligand>
</feature>
<feature type="binding site" evidence="5">
    <location>
        <position position="104"/>
    </location>
    <ligand>
        <name>UDP-alpha-D-glucose</name>
        <dbReference type="ChEBI" id="CHEBI:58885"/>
    </ligand>
</feature>
<feature type="binding site" evidence="5">
    <location>
        <position position="120"/>
    </location>
    <ligand>
        <name>Mn(2+)</name>
        <dbReference type="ChEBI" id="CHEBI:29035"/>
    </ligand>
</feature>
<feature type="binding site" evidence="3">
    <location>
        <position position="120"/>
    </location>
    <ligand>
        <name>UDP</name>
        <dbReference type="ChEBI" id="CHEBI:58223"/>
    </ligand>
</feature>
<feature type="binding site" evidence="5">
    <location>
        <position position="120"/>
    </location>
    <ligand>
        <name>UDP-alpha-D-glucose</name>
        <dbReference type="ChEBI" id="CHEBI:58885"/>
    </ligand>
</feature>
<feature type="binding site" evidence="5">
    <location>
        <position position="122"/>
    </location>
    <ligand>
        <name>Mn(2+)</name>
        <dbReference type="ChEBI" id="CHEBI:29035"/>
    </ligand>
</feature>
<feature type="binding site" evidence="5">
    <location>
        <position position="122"/>
    </location>
    <ligand>
        <name>UDP</name>
        <dbReference type="ChEBI" id="CHEBI:58223"/>
    </ligand>
</feature>
<feature type="binding site" evidence="5">
    <location>
        <position position="122"/>
    </location>
    <ligand>
        <name>UDP-alpha-D-glucose</name>
        <dbReference type="ChEBI" id="CHEBI:58885"/>
    </ligand>
</feature>
<feature type="binding site" evidence="5">
    <location>
        <position position="158"/>
    </location>
    <ligand>
        <name>UDP-alpha-D-glucose</name>
        <dbReference type="ChEBI" id="CHEBI:58885"/>
    </ligand>
</feature>
<feature type="binding site" evidence="5">
    <location>
        <position position="159"/>
    </location>
    <ligand>
        <name>UDP-alpha-D-glucose</name>
        <dbReference type="ChEBI" id="CHEBI:58885"/>
    </ligand>
</feature>
<feature type="binding site" evidence="5">
    <location>
        <position position="185"/>
    </location>
    <ligand>
        <name>UDP-alpha-D-glucose</name>
        <dbReference type="ChEBI" id="CHEBI:58885"/>
    </ligand>
</feature>
<feature type="binding site" evidence="5">
    <location>
        <position position="188"/>
    </location>
    <ligand>
        <name>UDP-alpha-D-glucose</name>
        <dbReference type="ChEBI" id="CHEBI:58885"/>
    </ligand>
</feature>
<feature type="binding site" evidence="5">
    <location>
        <position position="189"/>
    </location>
    <ligand>
        <name>UDP-alpha-D-glucose</name>
        <dbReference type="ChEBI" id="CHEBI:58885"/>
    </ligand>
</feature>
<feature type="binding site" evidence="5">
    <location>
        <position position="247"/>
    </location>
    <ligand>
        <name>Mn(2+)</name>
        <dbReference type="ChEBI" id="CHEBI:29035"/>
    </ligand>
</feature>
<feature type="binding site" evidence="3">
    <location>
        <position position="247"/>
    </location>
    <ligand>
        <name>UDP</name>
        <dbReference type="ChEBI" id="CHEBI:58223"/>
    </ligand>
</feature>
<feature type="binding site" evidence="5">
    <location>
        <position position="250"/>
    </location>
    <ligand>
        <name>UDP</name>
        <dbReference type="ChEBI" id="CHEBI:58223"/>
    </ligand>
</feature>
<feature type="binding site" evidence="5">
    <location>
        <position position="250"/>
    </location>
    <ligand>
        <name>UDP-alpha-D-glucose</name>
        <dbReference type="ChEBI" id="CHEBI:58885"/>
    </ligand>
</feature>
<feature type="binding site" evidence="5">
    <location>
        <position position="253"/>
    </location>
    <ligand>
        <name>UDP</name>
        <dbReference type="ChEBI" id="CHEBI:58223"/>
    </ligand>
</feature>
<feature type="binding site" evidence="5">
    <location>
        <position position="253"/>
    </location>
    <ligand>
        <name>UDP-alpha-D-glucose</name>
        <dbReference type="ChEBI" id="CHEBI:58885"/>
    </ligand>
</feature>
<feature type="site" description="Important for catalytic activity" evidence="3">
    <location>
        <position position="104"/>
    </location>
</feature>
<feature type="glycosylation site" description="O-linked (Glc...) tyrosine" evidence="5">
    <location>
        <position position="230"/>
    </location>
</feature>
<feature type="glycosylation site" description="O-linked (Glc...) tyrosine" evidence="1">
    <location>
        <position position="598"/>
    </location>
</feature>
<comment type="function">
    <text evidence="4">Self-glucosylating initiator of glycogen synthesis. It catalyzes the formation of a short alpha (1,4)-glucosyl chain covalently attached via a glucose 1-O-tyrosyl linkage to internal tyrosine residues and these chains act as primers for the elongation reaction catalyzed by glycogen synthase. Capable of transferring glucosyl residues to unbound acceptors such as free oligoglucans or oligoglucan derivatives.</text>
</comment>
<comment type="catalytic activity">
    <reaction evidence="4">
        <text>L-tyrosyl-[glycogenin] + UDP-alpha-D-glucose = alpha-D-glucosyl-L-tyrosyl-[glycogenin] + UDP + H(+)</text>
        <dbReference type="Rhea" id="RHEA:23360"/>
        <dbReference type="Rhea" id="RHEA-COMP:14604"/>
        <dbReference type="Rhea" id="RHEA-COMP:14605"/>
        <dbReference type="ChEBI" id="CHEBI:15378"/>
        <dbReference type="ChEBI" id="CHEBI:46858"/>
        <dbReference type="ChEBI" id="CHEBI:58223"/>
        <dbReference type="ChEBI" id="CHEBI:58885"/>
        <dbReference type="ChEBI" id="CHEBI:140573"/>
        <dbReference type="EC" id="2.4.1.186"/>
    </reaction>
</comment>
<comment type="catalytic activity">
    <reaction evidence="4">
        <text>[1,4-alpha-D-glucosyl](n)-L-tyrosyl-[glycogenin] + UDP-alpha-D-glucose = [1,4-alpha-D-glucosyl](n+1)-L-tyrosyl-[glycogenin] + UDP + H(+)</text>
        <dbReference type="Rhea" id="RHEA:56560"/>
        <dbReference type="Rhea" id="RHEA-COMP:14606"/>
        <dbReference type="Rhea" id="RHEA-COMP:14607"/>
        <dbReference type="ChEBI" id="CHEBI:15378"/>
        <dbReference type="ChEBI" id="CHEBI:58223"/>
        <dbReference type="ChEBI" id="CHEBI:58885"/>
        <dbReference type="ChEBI" id="CHEBI:140574"/>
        <dbReference type="EC" id="2.4.1.186"/>
    </reaction>
</comment>
<comment type="cofactor">
    <cofactor evidence="5">
        <name>Mn(2+)</name>
        <dbReference type="ChEBI" id="CHEBI:29035"/>
    </cofactor>
</comment>
<comment type="subcellular location">
    <subcellularLocation>
        <location evidence="2">Cytoplasm</location>
    </subcellularLocation>
    <subcellularLocation>
        <location evidence="2">Vacuole</location>
    </subcellularLocation>
    <text evidence="2">Localizes to glycogen granules (glycosomes) in the cytoplasm. Localizes to the vacuole during nitrogen starvation-induced glycophagy (autophagy of glycosomes).</text>
</comment>
<comment type="induction">
    <text>Induced during the diauxic transition.</text>
</comment>
<comment type="similarity">
    <text evidence="7">Belongs to the glycosyltransferase 8 family. Glycogenin subfamily.</text>
</comment>
<comment type="sequence caution" evidence="7">
    <conflict type="erroneous initiation">
        <sequence resource="EMBL-CDS" id="EDN59961"/>
    </conflict>
</comment>
<accession>A7A018</accession>
<protein>
    <recommendedName>
        <fullName>Glycogenin-1</fullName>
        <ecNumber>2.4.1.186</ecNumber>
    </recommendedName>
    <alternativeName>
        <fullName>Glycogen synthesis initiator protein 1</fullName>
    </alternativeName>
    <alternativeName>
        <fullName>Glycogenin glucosyltransferase 1</fullName>
    </alternativeName>
</protein>
<keyword id="KW-0963">Cytoplasm</keyword>
<keyword id="KW-0320">Glycogen biosynthesis</keyword>
<keyword id="KW-0325">Glycoprotein</keyword>
<keyword id="KW-0464">Manganese</keyword>
<keyword id="KW-0479">Metal-binding</keyword>
<keyword id="KW-0808">Transferase</keyword>
<keyword id="KW-0926">Vacuole</keyword>
<reference key="1">
    <citation type="journal article" date="2007" name="Proc. Natl. Acad. Sci. U.S.A.">
        <title>Genome sequencing and comparative analysis of Saccharomyces cerevisiae strain YJM789.</title>
        <authorList>
            <person name="Wei W."/>
            <person name="McCusker J.H."/>
            <person name="Hyman R.W."/>
            <person name="Jones T."/>
            <person name="Ning Y."/>
            <person name="Cao Z."/>
            <person name="Gu Z."/>
            <person name="Bruno D."/>
            <person name="Miranda M."/>
            <person name="Nguyen M."/>
            <person name="Wilhelmy J."/>
            <person name="Komp C."/>
            <person name="Tamse R."/>
            <person name="Wang X."/>
            <person name="Jia P."/>
            <person name="Luedi P."/>
            <person name="Oefner P.J."/>
            <person name="David L."/>
            <person name="Dietrich F.S."/>
            <person name="Li Y."/>
            <person name="Davis R.W."/>
            <person name="Steinmetz L.M."/>
        </authorList>
    </citation>
    <scope>NUCLEOTIDE SEQUENCE [LARGE SCALE GENOMIC DNA]</scope>
    <source>
        <strain>YJM789</strain>
    </source>
</reference>
<name>GLG1_YEAS7</name>
<gene>
    <name type="primary">GLG1</name>
    <name type="ORF">SCY_3428</name>
</gene>
<evidence type="ECO:0000250" key="1"/>
<evidence type="ECO:0000250" key="2">
    <source>
        <dbReference type="UniProtKB" id="C4R941"/>
    </source>
</evidence>
<evidence type="ECO:0000250" key="3">
    <source>
        <dbReference type="UniProtKB" id="P13280"/>
    </source>
</evidence>
<evidence type="ECO:0000250" key="4">
    <source>
        <dbReference type="UniProtKB" id="P36143"/>
    </source>
</evidence>
<evidence type="ECO:0000250" key="5">
    <source>
        <dbReference type="UniProtKB" id="P46976"/>
    </source>
</evidence>
<evidence type="ECO:0000256" key="6">
    <source>
        <dbReference type="SAM" id="MobiDB-lite"/>
    </source>
</evidence>
<evidence type="ECO:0000305" key="7"/>
<organism>
    <name type="scientific">Saccharomyces cerevisiae (strain YJM789)</name>
    <name type="common">Baker's yeast</name>
    <dbReference type="NCBI Taxonomy" id="307796"/>
    <lineage>
        <taxon>Eukaryota</taxon>
        <taxon>Fungi</taxon>
        <taxon>Dikarya</taxon>
        <taxon>Ascomycota</taxon>
        <taxon>Saccharomycotina</taxon>
        <taxon>Saccharomycetes</taxon>
        <taxon>Saccharomycetales</taxon>
        <taxon>Saccharomycetaceae</taxon>
        <taxon>Saccharomyces</taxon>
    </lineage>
</organism>
<sequence>MYKKLAIATLLYSADYLPGVFALGHQVNKLLEEAGKKGDIETCLIVTTSLFNDTLSELAKNLLQSIYTKIVLVEPLDCQEESIQKNSENLALLERPELSFALIKARLWELTQFEQVLYLDSDTLPLNKEFLKLFDIMSKQTTSQVGAIADIGWPDMFNSGVMMLIPDTDTASVLQNYIIENTSIDGSDQGILNQFFNQNCCTDELVKDSFSREWVQLSFTYNVTIPNLGYQSSPAMNYFKPSIKLIHFIGKHKPWSLWSQKNFIKNEYHDQWNEVYEEFKEEHQLNNEVSKPKISDSDKTETPETITPVDAPPSNEPTTNQEIDTISTVEENVDNQNAEPVPNSDHSPAPNPVPLDFTKWLTTFINKDHLTNQPVNESREYSKENDNNIINSSSNRDQESPPNSTQEPNSSYSVVSTQADSDEHQNAEEEDSTTDNASNSGEESHLDDISTAASSNNNVSNQPDNKNFSNSKENNISVEPSPSNPEQKRSTDNIQKPSVSTNDLPDDVEPHTSVDDNIQYLEKDKEGYEEFLPDVYESNAIDNEEEFFDDDARDATEGETKTSAVADKQEDMKLTAEETNQPQQEMPNFKFDWEDSDYLSKVERCFPDDIFEYAVE</sequence>
<proteinExistence type="evidence at transcript level"/>